<dbReference type="EC" id="7.1.1.2"/>
<dbReference type="EMBL" id="AB008539">
    <property type="protein sequence ID" value="BAA33022.1"/>
    <property type="molecule type" value="Genomic_DNA"/>
</dbReference>
<dbReference type="PIR" id="T11088">
    <property type="entry name" value="T11088"/>
</dbReference>
<dbReference type="RefSeq" id="NP_008419.1">
    <property type="nucleotide sequence ID" value="NC_001945.1"/>
</dbReference>
<dbReference type="SMR" id="O79546"/>
<dbReference type="GeneID" id="808264"/>
<dbReference type="CTD" id="4535"/>
<dbReference type="GO" id="GO:0005743">
    <property type="term" value="C:mitochondrial inner membrane"/>
    <property type="evidence" value="ECO:0007669"/>
    <property type="project" value="UniProtKB-SubCell"/>
</dbReference>
<dbReference type="GO" id="GO:0008137">
    <property type="term" value="F:NADH dehydrogenase (ubiquinone) activity"/>
    <property type="evidence" value="ECO:0007669"/>
    <property type="project" value="UniProtKB-EC"/>
</dbReference>
<dbReference type="GO" id="GO:0009060">
    <property type="term" value="P:aerobic respiration"/>
    <property type="evidence" value="ECO:0007669"/>
    <property type="project" value="TreeGrafter"/>
</dbReference>
<dbReference type="HAMAP" id="MF_01350">
    <property type="entry name" value="NDH1_NuoH"/>
    <property type="match status" value="1"/>
</dbReference>
<dbReference type="InterPro" id="IPR001694">
    <property type="entry name" value="NADH_UbQ_OxRdtase_su1/FPO"/>
</dbReference>
<dbReference type="InterPro" id="IPR018086">
    <property type="entry name" value="NADH_UbQ_OxRdtase_su1_CS"/>
</dbReference>
<dbReference type="PANTHER" id="PTHR11432">
    <property type="entry name" value="NADH DEHYDROGENASE SUBUNIT 1"/>
    <property type="match status" value="1"/>
</dbReference>
<dbReference type="PANTHER" id="PTHR11432:SF3">
    <property type="entry name" value="NADH-UBIQUINONE OXIDOREDUCTASE CHAIN 1"/>
    <property type="match status" value="1"/>
</dbReference>
<dbReference type="Pfam" id="PF00146">
    <property type="entry name" value="NADHdh"/>
    <property type="match status" value="1"/>
</dbReference>
<dbReference type="PROSITE" id="PS00667">
    <property type="entry name" value="COMPLEX1_ND1_1"/>
    <property type="match status" value="1"/>
</dbReference>
<dbReference type="PROSITE" id="PS00668">
    <property type="entry name" value="COMPLEX1_ND1_2"/>
    <property type="match status" value="1"/>
</dbReference>
<organism>
    <name type="scientific">Lycodon semicarinatus</name>
    <name type="common">Ryukyu odd-tooth snake</name>
    <name type="synonym">Eumesodon semicarinatus</name>
    <dbReference type="NCBI Taxonomy" id="56549"/>
    <lineage>
        <taxon>Eukaryota</taxon>
        <taxon>Metazoa</taxon>
        <taxon>Chordata</taxon>
        <taxon>Craniata</taxon>
        <taxon>Vertebrata</taxon>
        <taxon>Euteleostomi</taxon>
        <taxon>Lepidosauria</taxon>
        <taxon>Squamata</taxon>
        <taxon>Bifurcata</taxon>
        <taxon>Unidentata</taxon>
        <taxon>Episquamata</taxon>
        <taxon>Toxicofera</taxon>
        <taxon>Serpentes</taxon>
        <taxon>Colubroidea</taxon>
        <taxon>Colubridae</taxon>
        <taxon>Colubrinae</taxon>
        <taxon>Lycodon</taxon>
    </lineage>
</organism>
<evidence type="ECO:0000250" key="1"/>
<evidence type="ECO:0000255" key="2"/>
<evidence type="ECO:0000305" key="3"/>
<accession>O79546</accession>
<gene>
    <name type="primary">MT-ND1</name>
    <name type="synonym">MTND1</name>
    <name type="synonym">NADH1</name>
    <name type="synonym">ND1</name>
</gene>
<geneLocation type="mitochondrion"/>
<sequence length="321" mass="36003">MISMILLNITNSLLYILSILIAVAFLTLLERKLLGYMQHRKGPNLVGPMGLLQPIADGLKLITKEATKPTMSSPILFTLSPIMALILALTSWAPMPMPTPLTNMNLGLLFIMAMSGMFTYAILWSGWSSNSKYPLMGAMRAVAQIISYEVTLGLIIISMAILSGGYSLMLFTETQEHMWLLLSSWPLAMMWFTSTLAETNRSPFDLTEGESELVSGFNVEFSAGPFALLFLAEYTNILFMNTLSTMMFLNPGMTNPQLFTINLMTKTMILTTLFLWTRASYPRFRYDQLMHLLWKQYLPLTLAMYLLNTSTSMALCGTPPQ</sequence>
<protein>
    <recommendedName>
        <fullName>NADH-ubiquinone oxidoreductase chain 1</fullName>
        <ecNumber>7.1.1.2</ecNumber>
    </recommendedName>
    <alternativeName>
        <fullName>NADH dehydrogenase subunit 1</fullName>
    </alternativeName>
</protein>
<reference key="1">
    <citation type="journal article" date="1998" name="Genetics">
        <title>The complete nucleotide sequence of a snake (Dinodon semicarinatus) mitochondrial genome with two identical control regions.</title>
        <authorList>
            <person name="Kumazawa Y."/>
            <person name="Ota H."/>
            <person name="Nishida M."/>
            <person name="Ozawa T."/>
        </authorList>
    </citation>
    <scope>NUCLEOTIDE SEQUENCE [GENOMIC DNA]</scope>
    <source>
        <tissue>Liver</tissue>
    </source>
</reference>
<proteinExistence type="inferred from homology"/>
<comment type="function">
    <text evidence="1">Core subunit of the mitochondrial membrane respiratory chain NADH dehydrogenase (Complex I) that is believed to belong to the minimal assembly required for catalysis. Complex I functions in the transfer of electrons from NADH to the respiratory chain. The immediate electron acceptor for the enzyme is believed to be ubiquinone (By similarity).</text>
</comment>
<comment type="catalytic activity">
    <reaction>
        <text>a ubiquinone + NADH + 5 H(+)(in) = a ubiquinol + NAD(+) + 4 H(+)(out)</text>
        <dbReference type="Rhea" id="RHEA:29091"/>
        <dbReference type="Rhea" id="RHEA-COMP:9565"/>
        <dbReference type="Rhea" id="RHEA-COMP:9566"/>
        <dbReference type="ChEBI" id="CHEBI:15378"/>
        <dbReference type="ChEBI" id="CHEBI:16389"/>
        <dbReference type="ChEBI" id="CHEBI:17976"/>
        <dbReference type="ChEBI" id="CHEBI:57540"/>
        <dbReference type="ChEBI" id="CHEBI:57945"/>
        <dbReference type="EC" id="7.1.1.2"/>
    </reaction>
</comment>
<comment type="subcellular location">
    <subcellularLocation>
        <location evidence="1">Mitochondrion inner membrane</location>
        <topology evidence="1">Multi-pass membrane protein</topology>
    </subcellularLocation>
</comment>
<comment type="similarity">
    <text evidence="3">Belongs to the complex I subunit 1 family.</text>
</comment>
<feature type="chain" id="PRO_0000117384" description="NADH-ubiquinone oxidoreductase chain 1">
    <location>
        <begin position="1"/>
        <end position="321"/>
    </location>
</feature>
<feature type="transmembrane region" description="Helical" evidence="2">
    <location>
        <begin position="9"/>
        <end position="29"/>
    </location>
</feature>
<feature type="transmembrane region" description="Helical" evidence="2">
    <location>
        <begin position="75"/>
        <end position="95"/>
    </location>
</feature>
<feature type="transmembrane region" description="Helical" evidence="2">
    <location>
        <begin position="106"/>
        <end position="126"/>
    </location>
</feature>
<feature type="transmembrane region" description="Helical" evidence="2">
    <location>
        <begin position="151"/>
        <end position="171"/>
    </location>
</feature>
<feature type="transmembrane region" description="Helical" evidence="2">
    <location>
        <begin position="177"/>
        <end position="197"/>
    </location>
</feature>
<feature type="transmembrane region" description="Helical" evidence="2">
    <location>
        <begin position="219"/>
        <end position="239"/>
    </location>
</feature>
<feature type="transmembrane region" description="Helical" evidence="2">
    <location>
        <begin position="256"/>
        <end position="276"/>
    </location>
</feature>
<feature type="transmembrane region" description="Helical" evidence="2">
    <location>
        <begin position="297"/>
        <end position="317"/>
    </location>
</feature>
<keyword id="KW-0249">Electron transport</keyword>
<keyword id="KW-0472">Membrane</keyword>
<keyword id="KW-0496">Mitochondrion</keyword>
<keyword id="KW-0999">Mitochondrion inner membrane</keyword>
<keyword id="KW-0520">NAD</keyword>
<keyword id="KW-0679">Respiratory chain</keyword>
<keyword id="KW-1278">Translocase</keyword>
<keyword id="KW-0812">Transmembrane</keyword>
<keyword id="KW-1133">Transmembrane helix</keyword>
<keyword id="KW-0813">Transport</keyword>
<keyword id="KW-0830">Ubiquinone</keyword>
<name>NU1M_LYCSM</name>